<evidence type="ECO:0000255" key="1">
    <source>
        <dbReference type="HAMAP-Rule" id="MF_00146"/>
    </source>
</evidence>
<feature type="chain" id="PRO_1000009795" description="dCTP deaminase">
    <location>
        <begin position="1"/>
        <end position="188"/>
    </location>
</feature>
<feature type="active site" description="Proton donor/acceptor" evidence="1">
    <location>
        <position position="137"/>
    </location>
</feature>
<feature type="binding site" evidence="1">
    <location>
        <begin position="111"/>
        <end position="116"/>
    </location>
    <ligand>
        <name>dCTP</name>
        <dbReference type="ChEBI" id="CHEBI:61481"/>
    </ligand>
</feature>
<feature type="binding site" evidence="1">
    <location>
        <begin position="135"/>
        <end position="137"/>
    </location>
    <ligand>
        <name>dCTP</name>
        <dbReference type="ChEBI" id="CHEBI:61481"/>
    </ligand>
</feature>
<feature type="binding site" evidence="1">
    <location>
        <position position="156"/>
    </location>
    <ligand>
        <name>dCTP</name>
        <dbReference type="ChEBI" id="CHEBI:61481"/>
    </ligand>
</feature>
<feature type="binding site" evidence="1">
    <location>
        <position position="170"/>
    </location>
    <ligand>
        <name>dCTP</name>
        <dbReference type="ChEBI" id="CHEBI:61481"/>
    </ligand>
</feature>
<feature type="binding site" evidence="1">
    <location>
        <position position="180"/>
    </location>
    <ligand>
        <name>dCTP</name>
        <dbReference type="ChEBI" id="CHEBI:61481"/>
    </ligand>
</feature>
<gene>
    <name evidence="1" type="primary">dcd</name>
    <name type="ordered locus">Rmet_2755</name>
</gene>
<comment type="function">
    <text evidence="1">Catalyzes the deamination of dCTP to dUTP.</text>
</comment>
<comment type="catalytic activity">
    <reaction evidence="1">
        <text>dCTP + H2O + H(+) = dUTP + NH4(+)</text>
        <dbReference type="Rhea" id="RHEA:22680"/>
        <dbReference type="ChEBI" id="CHEBI:15377"/>
        <dbReference type="ChEBI" id="CHEBI:15378"/>
        <dbReference type="ChEBI" id="CHEBI:28938"/>
        <dbReference type="ChEBI" id="CHEBI:61481"/>
        <dbReference type="ChEBI" id="CHEBI:61555"/>
        <dbReference type="EC" id="3.5.4.13"/>
    </reaction>
</comment>
<comment type="pathway">
    <text evidence="1">Pyrimidine metabolism; dUMP biosynthesis; dUMP from dCTP (dUTP route): step 1/2.</text>
</comment>
<comment type="subunit">
    <text evidence="1">Homotrimer.</text>
</comment>
<comment type="similarity">
    <text evidence="1">Belongs to the dCTP deaminase family.</text>
</comment>
<reference key="1">
    <citation type="journal article" date="2010" name="PLoS ONE">
        <title>The complete genome sequence of Cupriavidus metallidurans strain CH34, a master survivalist in harsh and anthropogenic environments.</title>
        <authorList>
            <person name="Janssen P.J."/>
            <person name="Van Houdt R."/>
            <person name="Moors H."/>
            <person name="Monsieurs P."/>
            <person name="Morin N."/>
            <person name="Michaux A."/>
            <person name="Benotmane M.A."/>
            <person name="Leys N."/>
            <person name="Vallaeys T."/>
            <person name="Lapidus A."/>
            <person name="Monchy S."/>
            <person name="Medigue C."/>
            <person name="Taghavi S."/>
            <person name="McCorkle S."/>
            <person name="Dunn J."/>
            <person name="van der Lelie D."/>
            <person name="Mergeay M."/>
        </authorList>
    </citation>
    <scope>NUCLEOTIDE SEQUENCE [LARGE SCALE GENOMIC DNA]</scope>
    <source>
        <strain>ATCC 43123 / DSM 2839 / NBRC 102507 / CH34</strain>
    </source>
</reference>
<accession>Q1LJP8</accession>
<protein>
    <recommendedName>
        <fullName evidence="1">dCTP deaminase</fullName>
        <ecNumber evidence="1">3.5.4.13</ecNumber>
    </recommendedName>
    <alternativeName>
        <fullName evidence="1">Deoxycytidine triphosphate deaminase</fullName>
    </alternativeName>
</protein>
<sequence>MSIKSDKWIRRMAEQHGMIEPFEPGQVRESDGRKIVSYGTSSYGYDIRCADEFKIFTNINSTIVDPKNFDEKSFVDFKGDVCIIPPNSFALARTMEYFRIPRSVLTICLGKSTYARCGIIVNVTPFEPEWEGYVTLEFSNTTPLPAKIYAGEGCAQVLFFESDEICETSYADRGGKYQGQQGVTLPKT</sequence>
<dbReference type="EC" id="3.5.4.13" evidence="1"/>
<dbReference type="EMBL" id="CP000352">
    <property type="protein sequence ID" value="ABF09628.1"/>
    <property type="molecule type" value="Genomic_DNA"/>
</dbReference>
<dbReference type="RefSeq" id="WP_008646296.1">
    <property type="nucleotide sequence ID" value="NC_007973.1"/>
</dbReference>
<dbReference type="SMR" id="Q1LJP8"/>
<dbReference type="STRING" id="266264.Rmet_2755"/>
<dbReference type="GeneID" id="60820795"/>
<dbReference type="KEGG" id="rme:Rmet_2755"/>
<dbReference type="eggNOG" id="COG0717">
    <property type="taxonomic scope" value="Bacteria"/>
</dbReference>
<dbReference type="HOGENOM" id="CLU_087476_4_0_4"/>
<dbReference type="UniPathway" id="UPA00610">
    <property type="reaction ID" value="UER00665"/>
</dbReference>
<dbReference type="Proteomes" id="UP000002429">
    <property type="component" value="Chromosome"/>
</dbReference>
<dbReference type="GO" id="GO:0008829">
    <property type="term" value="F:dCTP deaminase activity"/>
    <property type="evidence" value="ECO:0007669"/>
    <property type="project" value="UniProtKB-UniRule"/>
</dbReference>
<dbReference type="GO" id="GO:0000166">
    <property type="term" value="F:nucleotide binding"/>
    <property type="evidence" value="ECO:0007669"/>
    <property type="project" value="UniProtKB-KW"/>
</dbReference>
<dbReference type="GO" id="GO:0006226">
    <property type="term" value="P:dUMP biosynthetic process"/>
    <property type="evidence" value="ECO:0007669"/>
    <property type="project" value="UniProtKB-UniPathway"/>
</dbReference>
<dbReference type="GO" id="GO:0006229">
    <property type="term" value="P:dUTP biosynthetic process"/>
    <property type="evidence" value="ECO:0007669"/>
    <property type="project" value="UniProtKB-UniRule"/>
</dbReference>
<dbReference type="GO" id="GO:0015949">
    <property type="term" value="P:nucleobase-containing small molecule interconversion"/>
    <property type="evidence" value="ECO:0007669"/>
    <property type="project" value="TreeGrafter"/>
</dbReference>
<dbReference type="CDD" id="cd07557">
    <property type="entry name" value="trimeric_dUTPase"/>
    <property type="match status" value="1"/>
</dbReference>
<dbReference type="FunFam" id="2.70.40.10:FF:000001">
    <property type="entry name" value="dCTP deaminase"/>
    <property type="match status" value="1"/>
</dbReference>
<dbReference type="Gene3D" id="2.70.40.10">
    <property type="match status" value="1"/>
</dbReference>
<dbReference type="HAMAP" id="MF_00146">
    <property type="entry name" value="dCTP_deaminase"/>
    <property type="match status" value="1"/>
</dbReference>
<dbReference type="InterPro" id="IPR011962">
    <property type="entry name" value="dCTP_deaminase"/>
</dbReference>
<dbReference type="InterPro" id="IPR036157">
    <property type="entry name" value="dUTPase-like_sf"/>
</dbReference>
<dbReference type="InterPro" id="IPR033704">
    <property type="entry name" value="dUTPase_trimeric"/>
</dbReference>
<dbReference type="NCBIfam" id="TIGR02274">
    <property type="entry name" value="dCTP_deam"/>
    <property type="match status" value="1"/>
</dbReference>
<dbReference type="PANTHER" id="PTHR42680">
    <property type="entry name" value="DCTP DEAMINASE"/>
    <property type="match status" value="1"/>
</dbReference>
<dbReference type="PANTHER" id="PTHR42680:SF3">
    <property type="entry name" value="DCTP DEAMINASE"/>
    <property type="match status" value="1"/>
</dbReference>
<dbReference type="Pfam" id="PF22769">
    <property type="entry name" value="DCD"/>
    <property type="match status" value="1"/>
</dbReference>
<dbReference type="SUPFAM" id="SSF51283">
    <property type="entry name" value="dUTPase-like"/>
    <property type="match status" value="1"/>
</dbReference>
<name>DCD_CUPMC</name>
<keyword id="KW-0378">Hydrolase</keyword>
<keyword id="KW-0546">Nucleotide metabolism</keyword>
<keyword id="KW-0547">Nucleotide-binding</keyword>
<keyword id="KW-1185">Reference proteome</keyword>
<proteinExistence type="inferred from homology"/>
<organism>
    <name type="scientific">Cupriavidus metallidurans (strain ATCC 43123 / DSM 2839 / NBRC 102507 / CH34)</name>
    <name type="common">Ralstonia metallidurans</name>
    <dbReference type="NCBI Taxonomy" id="266264"/>
    <lineage>
        <taxon>Bacteria</taxon>
        <taxon>Pseudomonadati</taxon>
        <taxon>Pseudomonadota</taxon>
        <taxon>Betaproteobacteria</taxon>
        <taxon>Burkholderiales</taxon>
        <taxon>Burkholderiaceae</taxon>
        <taxon>Cupriavidus</taxon>
    </lineage>
</organism>